<name>NADC_SALTY</name>
<keyword id="KW-0002">3D-structure</keyword>
<keyword id="KW-0903">Direct protein sequencing</keyword>
<keyword id="KW-0328">Glycosyltransferase</keyword>
<keyword id="KW-0662">Pyridine nucleotide biosynthesis</keyword>
<keyword id="KW-1185">Reference proteome</keyword>
<keyword id="KW-0808">Transferase</keyword>
<protein>
    <recommendedName>
        <fullName>Nicotinate-nucleotide pyrophosphorylase [carboxylating]</fullName>
        <ecNumber>2.4.2.19</ecNumber>
    </recommendedName>
    <alternativeName>
        <fullName>Quinolinate phosphoribosyltransferase [decarboxylating]</fullName>
        <shortName>QAPRTase</shortName>
    </alternativeName>
</protein>
<dbReference type="EC" id="2.4.2.19"/>
<dbReference type="EMBL" id="L07292">
    <property type="protein sequence ID" value="AAA03225.1"/>
    <property type="molecule type" value="Genomic_DNA"/>
</dbReference>
<dbReference type="EMBL" id="AE006468">
    <property type="protein sequence ID" value="AAL19109.1"/>
    <property type="molecule type" value="Genomic_DNA"/>
</dbReference>
<dbReference type="RefSeq" id="NP_459150.1">
    <property type="nucleotide sequence ID" value="NC_003197.2"/>
</dbReference>
<dbReference type="RefSeq" id="WP_001135135.1">
    <property type="nucleotide sequence ID" value="NC_003197.2"/>
</dbReference>
<dbReference type="PDB" id="1QAP">
    <property type="method" value="X-ray"/>
    <property type="resolution" value="2.80 A"/>
    <property type="chains" value="A/B=2-297"/>
</dbReference>
<dbReference type="PDBsum" id="1QAP"/>
<dbReference type="SMR" id="P30012"/>
<dbReference type="STRING" id="99287.STM0145"/>
<dbReference type="DrugBank" id="DB01796">
    <property type="generic name" value="Quinolinic Acid"/>
</dbReference>
<dbReference type="PaxDb" id="99287-STM0145"/>
<dbReference type="GeneID" id="1251663"/>
<dbReference type="KEGG" id="stm:STM0145"/>
<dbReference type="PATRIC" id="fig|99287.12.peg.154"/>
<dbReference type="HOGENOM" id="CLU_039622_0_3_6"/>
<dbReference type="OMA" id="DIVMCDN"/>
<dbReference type="PhylomeDB" id="P30012"/>
<dbReference type="BioCyc" id="SENT99287:STM0145-MONOMER"/>
<dbReference type="UniPathway" id="UPA00253">
    <property type="reaction ID" value="UER00331"/>
</dbReference>
<dbReference type="EvolutionaryTrace" id="P30012"/>
<dbReference type="Proteomes" id="UP000001014">
    <property type="component" value="Chromosome"/>
</dbReference>
<dbReference type="GO" id="GO:0005737">
    <property type="term" value="C:cytoplasm"/>
    <property type="evidence" value="ECO:0000318"/>
    <property type="project" value="GO_Central"/>
</dbReference>
<dbReference type="GO" id="GO:0004514">
    <property type="term" value="F:nicotinate-nucleotide diphosphorylase (carboxylating) activity"/>
    <property type="evidence" value="ECO:0000318"/>
    <property type="project" value="GO_Central"/>
</dbReference>
<dbReference type="GO" id="GO:0009435">
    <property type="term" value="P:NAD biosynthetic process"/>
    <property type="evidence" value="ECO:0000318"/>
    <property type="project" value="GO_Central"/>
</dbReference>
<dbReference type="GO" id="GO:0034213">
    <property type="term" value="P:quinolinate catabolic process"/>
    <property type="evidence" value="ECO:0000318"/>
    <property type="project" value="GO_Central"/>
</dbReference>
<dbReference type="CDD" id="cd01572">
    <property type="entry name" value="QPRTase"/>
    <property type="match status" value="1"/>
</dbReference>
<dbReference type="FunFam" id="3.90.1170.20:FF:000002">
    <property type="entry name" value="Nicotinate-nucleotide pyrophosphorylase [carboxylating]"/>
    <property type="match status" value="1"/>
</dbReference>
<dbReference type="FunFam" id="3.20.20.70:FF:000030">
    <property type="entry name" value="Nicotinate-nucleotide pyrophosphorylase, carboxylating"/>
    <property type="match status" value="1"/>
</dbReference>
<dbReference type="Gene3D" id="3.20.20.70">
    <property type="entry name" value="Aldolase class I"/>
    <property type="match status" value="1"/>
</dbReference>
<dbReference type="Gene3D" id="3.90.1170.20">
    <property type="entry name" value="Quinolinate phosphoribosyl transferase, N-terminal domain"/>
    <property type="match status" value="1"/>
</dbReference>
<dbReference type="InterPro" id="IPR013785">
    <property type="entry name" value="Aldolase_TIM"/>
</dbReference>
<dbReference type="InterPro" id="IPR004393">
    <property type="entry name" value="NadC"/>
</dbReference>
<dbReference type="InterPro" id="IPR027277">
    <property type="entry name" value="NadC/ModD"/>
</dbReference>
<dbReference type="InterPro" id="IPR036068">
    <property type="entry name" value="Nicotinate_pribotase-like_C"/>
</dbReference>
<dbReference type="InterPro" id="IPR037128">
    <property type="entry name" value="Quinolinate_PRibosylTase_N_sf"/>
</dbReference>
<dbReference type="InterPro" id="IPR002638">
    <property type="entry name" value="Quinolinate_PRibosylTrfase_C"/>
</dbReference>
<dbReference type="InterPro" id="IPR022412">
    <property type="entry name" value="Quinolinate_PRibosylTrfase_N"/>
</dbReference>
<dbReference type="NCBIfam" id="TIGR00078">
    <property type="entry name" value="nadC"/>
    <property type="match status" value="1"/>
</dbReference>
<dbReference type="PANTHER" id="PTHR32179">
    <property type="entry name" value="NICOTINATE-NUCLEOTIDE PYROPHOSPHORYLASE [CARBOXYLATING]"/>
    <property type="match status" value="1"/>
</dbReference>
<dbReference type="PANTHER" id="PTHR32179:SF3">
    <property type="entry name" value="NICOTINATE-NUCLEOTIDE PYROPHOSPHORYLASE [CARBOXYLATING]"/>
    <property type="match status" value="1"/>
</dbReference>
<dbReference type="Pfam" id="PF01729">
    <property type="entry name" value="QRPTase_C"/>
    <property type="match status" value="1"/>
</dbReference>
<dbReference type="Pfam" id="PF02749">
    <property type="entry name" value="QRPTase_N"/>
    <property type="match status" value="1"/>
</dbReference>
<dbReference type="PIRSF" id="PIRSF006250">
    <property type="entry name" value="NadC_ModD"/>
    <property type="match status" value="1"/>
</dbReference>
<dbReference type="SUPFAM" id="SSF51690">
    <property type="entry name" value="Nicotinate/Quinolinate PRTase C-terminal domain-like"/>
    <property type="match status" value="1"/>
</dbReference>
<dbReference type="SUPFAM" id="SSF54675">
    <property type="entry name" value="Nicotinate/Quinolinate PRTase N-terminal domain-like"/>
    <property type="match status" value="1"/>
</dbReference>
<accession>P30012</accession>
<organism>
    <name type="scientific">Salmonella typhimurium (strain LT2 / SGSC1412 / ATCC 700720)</name>
    <dbReference type="NCBI Taxonomy" id="99287"/>
    <lineage>
        <taxon>Bacteria</taxon>
        <taxon>Pseudomonadati</taxon>
        <taxon>Pseudomonadota</taxon>
        <taxon>Gammaproteobacteria</taxon>
        <taxon>Enterobacterales</taxon>
        <taxon>Enterobacteriaceae</taxon>
        <taxon>Salmonella</taxon>
    </lineage>
</organism>
<reference key="1">
    <citation type="journal article" date="1993" name="J. Bacteriol.">
        <title>The Salmonella typhimurium nadC gene: sequence determination by use of Mud-P22 and purification of quinolinate phosphoribosyltransferase.</title>
        <authorList>
            <person name="Hughes K.T."/>
            <person name="Dessen A."/>
            <person name="Gray J.P."/>
            <person name="Grubmeyer C."/>
        </authorList>
    </citation>
    <scope>NUCLEOTIDE SEQUENCE [GENOMIC DNA]</scope>
    <scope>PARTIAL PROTEIN SEQUENCE</scope>
    <source>
        <strain>LT2</strain>
    </source>
</reference>
<reference key="2">
    <citation type="journal article" date="2001" name="Nature">
        <title>Complete genome sequence of Salmonella enterica serovar Typhimurium LT2.</title>
        <authorList>
            <person name="McClelland M."/>
            <person name="Sanderson K.E."/>
            <person name="Spieth J."/>
            <person name="Clifton S.W."/>
            <person name="Latreille P."/>
            <person name="Courtney L."/>
            <person name="Porwollik S."/>
            <person name="Ali J."/>
            <person name="Dante M."/>
            <person name="Du F."/>
            <person name="Hou S."/>
            <person name="Layman D."/>
            <person name="Leonard S."/>
            <person name="Nguyen C."/>
            <person name="Scott K."/>
            <person name="Holmes A."/>
            <person name="Grewal N."/>
            <person name="Mulvaney E."/>
            <person name="Ryan E."/>
            <person name="Sun H."/>
            <person name="Florea L."/>
            <person name="Miller W."/>
            <person name="Stoneking T."/>
            <person name="Nhan M."/>
            <person name="Waterston R."/>
            <person name="Wilson R.K."/>
        </authorList>
    </citation>
    <scope>NUCLEOTIDE SEQUENCE [LARGE SCALE GENOMIC DNA]</scope>
    <source>
        <strain>LT2 / SGSC1412 / ATCC 700720</strain>
    </source>
</reference>
<reference key="3">
    <citation type="journal article" date="1997" name="Structure">
        <title>A new function for a common fold: the crystal structure of quinolinic acid phosphoribosyltransferase.</title>
        <authorList>
            <person name="Eads J.C."/>
            <person name="Ozturk D."/>
            <person name="Wexler T.B."/>
            <person name="Grubmeyer C."/>
            <person name="Sacchettini J.C."/>
        </authorList>
    </citation>
    <scope>X-RAY CRYSTALLOGRAPHY (2.8 ANGSTROMS) IN COMPLEX WITH SUBSTRATE</scope>
    <scope>SUBUNIT</scope>
</reference>
<gene>
    <name type="primary">nadC</name>
    <name type="ordered locus">STM0145</name>
</gene>
<comment type="function">
    <text evidence="1">Involved in the catabolism of quinolinic acid (QA).</text>
</comment>
<comment type="catalytic activity">
    <reaction>
        <text>nicotinate beta-D-ribonucleotide + CO2 + diphosphate = quinolinate + 5-phospho-alpha-D-ribose 1-diphosphate + 2 H(+)</text>
        <dbReference type="Rhea" id="RHEA:12733"/>
        <dbReference type="ChEBI" id="CHEBI:15378"/>
        <dbReference type="ChEBI" id="CHEBI:16526"/>
        <dbReference type="ChEBI" id="CHEBI:29959"/>
        <dbReference type="ChEBI" id="CHEBI:33019"/>
        <dbReference type="ChEBI" id="CHEBI:57502"/>
        <dbReference type="ChEBI" id="CHEBI:58017"/>
        <dbReference type="EC" id="2.4.2.19"/>
    </reaction>
</comment>
<comment type="pathway">
    <text>Cofactor biosynthesis; NAD(+) biosynthesis; nicotinate D-ribonucleotide from quinolinate: step 1/1.</text>
</comment>
<comment type="subunit">
    <text evidence="1 2">Hexamer formed by 3 homodimers (By similarity). Homodimer.</text>
</comment>
<comment type="similarity">
    <text evidence="3">Belongs to the NadC/ModD family.</text>
</comment>
<sequence length="297" mass="32560">MPPRRYNPDDRRDALLERINLDIPAAVAQALREDLGGEVDAGNDITAQLLPADTQAHATVITREDGVFCGKRWVEEVFIQLAGDDVRLTWHVDDGDAIHANQTVFELNGPARVLLTGERTALNFVQTLSGVASEVRRYVGLLAGTQTQLLDTRKTLPGLRTALKYAVLCGGGANHRLGLTDAFLIKENHIIASGSVRQAVEKAFWLHPDVPVEVEVENLDELDDALKAGADIIMLDNFNTDQMREAVKRVNGQARLEVSGNVTAETLREFAETGVDFISVGALTKHVRALDLSMRFC</sequence>
<feature type="initiator methionine" description="Removed">
    <location>
        <position position="1"/>
    </location>
</feature>
<feature type="chain" id="PRO_0000155949" description="Nicotinate-nucleotide pyrophosphorylase [carboxylating]">
    <location>
        <begin position="2"/>
        <end position="297"/>
    </location>
</feature>
<feature type="binding site" evidence="1">
    <location>
        <position position="119"/>
    </location>
    <ligand>
        <name>substrate</name>
    </ligand>
</feature>
<feature type="binding site">
    <location>
        <begin position="152"/>
        <end position="154"/>
    </location>
    <ligand>
        <name>substrate</name>
    </ligand>
</feature>
<feature type="binding site" evidence="2">
    <location>
        <position position="176"/>
    </location>
    <ligand>
        <name>substrate</name>
    </ligand>
</feature>
<feature type="binding site" evidence="1">
    <location>
        <position position="186"/>
    </location>
    <ligand>
        <name>substrate</name>
    </ligand>
</feature>
<feature type="binding site" evidence="1">
    <location>
        <position position="215"/>
    </location>
    <ligand>
        <name>substrate</name>
    </ligand>
</feature>
<feature type="binding site" evidence="1">
    <location>
        <position position="236"/>
    </location>
    <ligand>
        <name>substrate</name>
    </ligand>
</feature>
<feature type="binding site" evidence="1">
    <location>
        <begin position="259"/>
        <end position="261"/>
    </location>
    <ligand>
        <name>substrate</name>
    </ligand>
</feature>
<feature type="binding site" evidence="1">
    <location>
        <begin position="280"/>
        <end position="282"/>
    </location>
    <ligand>
        <name>substrate</name>
    </ligand>
</feature>
<feature type="modified residue" description="Blocked amino end (Pro)">
    <location>
        <position position="2"/>
    </location>
</feature>
<feature type="helix" evidence="4">
    <location>
        <begin position="11"/>
        <end position="34"/>
    </location>
</feature>
<feature type="turn" evidence="4">
    <location>
        <begin position="35"/>
        <end position="37"/>
    </location>
</feature>
<feature type="helix" evidence="4">
    <location>
        <begin position="41"/>
        <end position="43"/>
    </location>
</feature>
<feature type="helix" evidence="4">
    <location>
        <begin position="46"/>
        <end position="49"/>
    </location>
</feature>
<feature type="strand" evidence="4">
    <location>
        <begin position="59"/>
        <end position="64"/>
    </location>
</feature>
<feature type="helix" evidence="4">
    <location>
        <begin position="71"/>
        <end position="82"/>
    </location>
</feature>
<feature type="strand" evidence="4">
    <location>
        <begin position="85"/>
        <end position="91"/>
    </location>
</feature>
<feature type="strand" evidence="4">
    <location>
        <begin position="103"/>
        <end position="110"/>
    </location>
</feature>
<feature type="helix" evidence="4">
    <location>
        <begin position="111"/>
        <end position="140"/>
    </location>
</feature>
<feature type="turn" evidence="4">
    <location>
        <begin position="141"/>
        <end position="144"/>
    </location>
</feature>
<feature type="strand" evidence="4">
    <location>
        <begin position="148"/>
        <end position="150"/>
    </location>
</feature>
<feature type="helix" evidence="4">
    <location>
        <begin position="160"/>
        <end position="170"/>
    </location>
</feature>
<feature type="strand" evidence="4">
    <location>
        <begin position="177"/>
        <end position="181"/>
    </location>
</feature>
<feature type="strand" evidence="4">
    <location>
        <begin position="183"/>
        <end position="185"/>
    </location>
</feature>
<feature type="helix" evidence="4">
    <location>
        <begin position="187"/>
        <end position="193"/>
    </location>
</feature>
<feature type="helix" evidence="4">
    <location>
        <begin position="196"/>
        <end position="206"/>
    </location>
</feature>
<feature type="strand" evidence="4">
    <location>
        <begin position="212"/>
        <end position="218"/>
    </location>
</feature>
<feature type="helix" evidence="4">
    <location>
        <begin position="219"/>
        <end position="227"/>
    </location>
</feature>
<feature type="strand" evidence="4">
    <location>
        <begin position="231"/>
        <end position="237"/>
    </location>
</feature>
<feature type="helix" evidence="4">
    <location>
        <begin position="240"/>
        <end position="248"/>
    </location>
</feature>
<feature type="strand" evidence="4">
    <location>
        <begin position="256"/>
        <end position="258"/>
    </location>
</feature>
<feature type="helix" evidence="4">
    <location>
        <begin position="264"/>
        <end position="272"/>
    </location>
</feature>
<feature type="strand" evidence="4">
    <location>
        <begin position="276"/>
        <end position="279"/>
    </location>
</feature>
<feature type="helix" evidence="4">
    <location>
        <begin position="282"/>
        <end position="285"/>
    </location>
</feature>
<feature type="strand" evidence="4">
    <location>
        <begin position="286"/>
        <end position="288"/>
    </location>
</feature>
<feature type="strand" evidence="4">
    <location>
        <begin position="292"/>
        <end position="295"/>
    </location>
</feature>
<evidence type="ECO:0000250" key="1"/>
<evidence type="ECO:0000269" key="2">
    <source>
    </source>
</evidence>
<evidence type="ECO:0000305" key="3"/>
<evidence type="ECO:0007829" key="4">
    <source>
        <dbReference type="PDB" id="1QAP"/>
    </source>
</evidence>
<proteinExistence type="evidence at protein level"/>